<comment type="function">
    <text evidence="1">Catalyzes the methyl esterification of L-isoaspartyl residues in peptides and proteins that result from spontaneous decomposition of normal L-aspartyl and L-asparaginyl residues. It plays a role in the repair and/or degradation of damaged proteins.</text>
</comment>
<comment type="catalytic activity">
    <reaction evidence="1">
        <text>[protein]-L-isoaspartate + S-adenosyl-L-methionine = [protein]-L-isoaspartate alpha-methyl ester + S-adenosyl-L-homocysteine</text>
        <dbReference type="Rhea" id="RHEA:12705"/>
        <dbReference type="Rhea" id="RHEA-COMP:12143"/>
        <dbReference type="Rhea" id="RHEA-COMP:12144"/>
        <dbReference type="ChEBI" id="CHEBI:57856"/>
        <dbReference type="ChEBI" id="CHEBI:59789"/>
        <dbReference type="ChEBI" id="CHEBI:90596"/>
        <dbReference type="ChEBI" id="CHEBI:90598"/>
        <dbReference type="EC" id="2.1.1.77"/>
    </reaction>
</comment>
<comment type="subcellular location">
    <subcellularLocation>
        <location evidence="1">Cytoplasm</location>
    </subcellularLocation>
</comment>
<comment type="similarity">
    <text evidence="1">Belongs to the methyltransferase superfamily. L-isoaspartyl/D-aspartyl protein methyltransferase family.</text>
</comment>
<accession>B2I8X8</accession>
<sequence>MTAPPSLQAKAVGIGMTSQRVRDRLVERLRECGIQDERVLSTIRIVPRHLFIDEALALRAYEDTALPIGHGQTISQPWVVARMTEAVMQVVPKKILEIGTGSGYQSAILASLGLEVYTIERIGKLLRQARKRFRQLGIKIRSKHDDGSTGWTEHAPYNAILVTAAAPTLIDTLIEQLAIGGRLVAPVGTASEQALVQLTRTIDGSITHEILEPVTFVSLLPGMLD</sequence>
<protein>
    <recommendedName>
        <fullName evidence="1">Protein-L-isoaspartate O-methyltransferase</fullName>
        <ecNumber evidence="1">2.1.1.77</ecNumber>
    </recommendedName>
    <alternativeName>
        <fullName evidence="1">L-isoaspartyl protein carboxyl methyltransferase</fullName>
    </alternativeName>
    <alternativeName>
        <fullName evidence="1">Protein L-isoaspartyl methyltransferase</fullName>
    </alternativeName>
    <alternativeName>
        <fullName evidence="1">Protein-beta-aspartate methyltransferase</fullName>
        <shortName evidence="1">PIMT</shortName>
    </alternativeName>
</protein>
<proteinExistence type="inferred from homology"/>
<organism>
    <name type="scientific">Xylella fastidiosa (strain M23)</name>
    <dbReference type="NCBI Taxonomy" id="405441"/>
    <lineage>
        <taxon>Bacteria</taxon>
        <taxon>Pseudomonadati</taxon>
        <taxon>Pseudomonadota</taxon>
        <taxon>Gammaproteobacteria</taxon>
        <taxon>Lysobacterales</taxon>
        <taxon>Lysobacteraceae</taxon>
        <taxon>Xylella</taxon>
    </lineage>
</organism>
<keyword id="KW-0963">Cytoplasm</keyword>
<keyword id="KW-0489">Methyltransferase</keyword>
<keyword id="KW-0949">S-adenosyl-L-methionine</keyword>
<keyword id="KW-0808">Transferase</keyword>
<name>PIMT_XYLF2</name>
<gene>
    <name evidence="1" type="primary">pcm</name>
    <name type="ordered locus">XfasM23_1919</name>
</gene>
<dbReference type="EC" id="2.1.1.77" evidence="1"/>
<dbReference type="EMBL" id="CP001011">
    <property type="protein sequence ID" value="ACB93319.1"/>
    <property type="molecule type" value="Genomic_DNA"/>
</dbReference>
<dbReference type="RefSeq" id="WP_011098268.1">
    <property type="nucleotide sequence ID" value="NC_010577.1"/>
</dbReference>
<dbReference type="SMR" id="B2I8X8"/>
<dbReference type="KEGG" id="xfn:XfasM23_1919"/>
<dbReference type="HOGENOM" id="CLU_055432_2_0_6"/>
<dbReference type="Proteomes" id="UP000001698">
    <property type="component" value="Chromosome"/>
</dbReference>
<dbReference type="GO" id="GO:0005737">
    <property type="term" value="C:cytoplasm"/>
    <property type="evidence" value="ECO:0007669"/>
    <property type="project" value="UniProtKB-SubCell"/>
</dbReference>
<dbReference type="GO" id="GO:0004719">
    <property type="term" value="F:protein-L-isoaspartate (D-aspartate) O-methyltransferase activity"/>
    <property type="evidence" value="ECO:0007669"/>
    <property type="project" value="UniProtKB-UniRule"/>
</dbReference>
<dbReference type="GO" id="GO:0032259">
    <property type="term" value="P:methylation"/>
    <property type="evidence" value="ECO:0007669"/>
    <property type="project" value="UniProtKB-KW"/>
</dbReference>
<dbReference type="GO" id="GO:0036211">
    <property type="term" value="P:protein modification process"/>
    <property type="evidence" value="ECO:0007669"/>
    <property type="project" value="UniProtKB-UniRule"/>
</dbReference>
<dbReference type="GO" id="GO:0030091">
    <property type="term" value="P:protein repair"/>
    <property type="evidence" value="ECO:0007669"/>
    <property type="project" value="UniProtKB-UniRule"/>
</dbReference>
<dbReference type="CDD" id="cd02440">
    <property type="entry name" value="AdoMet_MTases"/>
    <property type="match status" value="1"/>
</dbReference>
<dbReference type="FunFam" id="3.40.50.150:FF:000010">
    <property type="entry name" value="Protein-L-isoaspartate O-methyltransferase"/>
    <property type="match status" value="1"/>
</dbReference>
<dbReference type="Gene3D" id="3.40.50.150">
    <property type="entry name" value="Vaccinia Virus protein VP39"/>
    <property type="match status" value="1"/>
</dbReference>
<dbReference type="HAMAP" id="MF_00090">
    <property type="entry name" value="PIMT"/>
    <property type="match status" value="1"/>
</dbReference>
<dbReference type="InterPro" id="IPR000682">
    <property type="entry name" value="PCMT"/>
</dbReference>
<dbReference type="InterPro" id="IPR029063">
    <property type="entry name" value="SAM-dependent_MTases_sf"/>
</dbReference>
<dbReference type="NCBIfam" id="TIGR00080">
    <property type="entry name" value="pimt"/>
    <property type="match status" value="1"/>
</dbReference>
<dbReference type="NCBIfam" id="NF001453">
    <property type="entry name" value="PRK00312.1"/>
    <property type="match status" value="1"/>
</dbReference>
<dbReference type="PANTHER" id="PTHR11579">
    <property type="entry name" value="PROTEIN-L-ISOASPARTATE O-METHYLTRANSFERASE"/>
    <property type="match status" value="1"/>
</dbReference>
<dbReference type="PANTHER" id="PTHR11579:SF0">
    <property type="entry name" value="PROTEIN-L-ISOASPARTATE(D-ASPARTATE) O-METHYLTRANSFERASE"/>
    <property type="match status" value="1"/>
</dbReference>
<dbReference type="Pfam" id="PF01135">
    <property type="entry name" value="PCMT"/>
    <property type="match status" value="1"/>
</dbReference>
<dbReference type="SUPFAM" id="SSF53335">
    <property type="entry name" value="S-adenosyl-L-methionine-dependent methyltransferases"/>
    <property type="match status" value="1"/>
</dbReference>
<dbReference type="PROSITE" id="PS01279">
    <property type="entry name" value="PCMT"/>
    <property type="match status" value="1"/>
</dbReference>
<feature type="chain" id="PRO_0000351960" description="Protein-L-isoaspartate O-methyltransferase">
    <location>
        <begin position="1"/>
        <end position="225"/>
    </location>
</feature>
<feature type="active site" evidence="1">
    <location>
        <position position="75"/>
    </location>
</feature>
<evidence type="ECO:0000255" key="1">
    <source>
        <dbReference type="HAMAP-Rule" id="MF_00090"/>
    </source>
</evidence>
<reference key="1">
    <citation type="journal article" date="2010" name="J. Bacteriol.">
        <title>Whole genome sequences of two Xylella fastidiosa strains (M12 and M23) causing almond leaf scorch disease in California.</title>
        <authorList>
            <person name="Chen J."/>
            <person name="Xie G."/>
            <person name="Han S."/>
            <person name="Chertkov O."/>
            <person name="Sims D."/>
            <person name="Civerolo E.L."/>
        </authorList>
    </citation>
    <scope>NUCLEOTIDE SEQUENCE [LARGE SCALE GENOMIC DNA]</scope>
    <source>
        <strain>M23</strain>
    </source>
</reference>